<comment type="function">
    <text evidence="1">Involved in the modulation of the activity of the glucose-phosphotransferase system (glucose-PTS). Interacts with the transcriptional repressor Mlc, preventing its interaction with DNA and leading to the modulation of expression of genes regulated by Mlc, including ptsG, which encodes the PTS system glucose-specific EIICB component.</text>
</comment>
<comment type="function">
    <text evidence="1">Shows zinc-dependent metallopeptidase activity.</text>
</comment>
<comment type="cofactor">
    <cofactor evidence="1">
        <name>Zn(2+)</name>
        <dbReference type="ChEBI" id="CHEBI:29105"/>
    </cofactor>
    <text evidence="1">Binds 1 zinc ion per subunit.</text>
</comment>
<comment type="subunit">
    <text evidence="1">Interacts with Mlc.</text>
</comment>
<comment type="subcellular location">
    <subcellularLocation>
        <location evidence="1">Cytoplasm</location>
    </subcellularLocation>
</comment>
<comment type="similarity">
    <text evidence="1">Belongs to the MtfA family.</text>
</comment>
<comment type="sequence caution" evidence="2">
    <conflict type="erroneous initiation">
        <sequence resource="EMBL-CDS" id="AAN43588"/>
    </conflict>
</comment>
<comment type="sequence caution" evidence="2">
    <conflict type="erroneous initiation">
        <sequence resource="EMBL-CDS" id="AAP17413"/>
    </conflict>
</comment>
<keyword id="KW-0031">Aminopeptidase</keyword>
<keyword id="KW-0963">Cytoplasm</keyword>
<keyword id="KW-0378">Hydrolase</keyword>
<keyword id="KW-0479">Metal-binding</keyword>
<keyword id="KW-0482">Metalloprotease</keyword>
<keyword id="KW-0645">Protease</keyword>
<keyword id="KW-1185">Reference proteome</keyword>
<keyword id="KW-0862">Zinc</keyword>
<proteinExistence type="inferred from homology"/>
<reference key="1">
    <citation type="journal article" date="2002" name="Nucleic Acids Res.">
        <title>Genome sequence of Shigella flexneri 2a: insights into pathogenicity through comparison with genomes of Escherichia coli K12 and O157.</title>
        <authorList>
            <person name="Jin Q."/>
            <person name="Yuan Z."/>
            <person name="Xu J."/>
            <person name="Wang Y."/>
            <person name="Shen Y."/>
            <person name="Lu W."/>
            <person name="Wang J."/>
            <person name="Liu H."/>
            <person name="Yang J."/>
            <person name="Yang F."/>
            <person name="Zhang X."/>
            <person name="Zhang J."/>
            <person name="Yang G."/>
            <person name="Wu H."/>
            <person name="Qu D."/>
            <person name="Dong J."/>
            <person name="Sun L."/>
            <person name="Xue Y."/>
            <person name="Zhao A."/>
            <person name="Gao Y."/>
            <person name="Zhu J."/>
            <person name="Kan B."/>
            <person name="Ding K."/>
            <person name="Chen S."/>
            <person name="Cheng H."/>
            <person name="Yao Z."/>
            <person name="He B."/>
            <person name="Chen R."/>
            <person name="Ma D."/>
            <person name="Qiang B."/>
            <person name="Wen Y."/>
            <person name="Hou Y."/>
            <person name="Yu J."/>
        </authorList>
    </citation>
    <scope>NUCLEOTIDE SEQUENCE [LARGE SCALE GENOMIC DNA]</scope>
    <source>
        <strain>301 / Serotype 2a</strain>
    </source>
</reference>
<reference key="2">
    <citation type="journal article" date="2003" name="Infect. Immun.">
        <title>Complete genome sequence and comparative genomics of Shigella flexneri serotype 2a strain 2457T.</title>
        <authorList>
            <person name="Wei J."/>
            <person name="Goldberg M.B."/>
            <person name="Burland V."/>
            <person name="Venkatesan M.M."/>
            <person name="Deng W."/>
            <person name="Fournier G."/>
            <person name="Mayhew G.F."/>
            <person name="Plunkett G. III"/>
            <person name="Rose D.J."/>
            <person name="Darling A."/>
            <person name="Mau B."/>
            <person name="Perna N.T."/>
            <person name="Payne S.M."/>
            <person name="Runyen-Janecky L.J."/>
            <person name="Zhou S."/>
            <person name="Schwartz D.C."/>
            <person name="Blattner F.R."/>
        </authorList>
    </citation>
    <scope>NUCLEOTIDE SEQUENCE [LARGE SCALE GENOMIC DNA]</scope>
    <source>
        <strain>ATCC 700930 / 2457T / Serotype 2a</strain>
    </source>
</reference>
<feature type="chain" id="PRO_0000316325" description="Mlc titration factor A">
    <location>
        <begin position="1"/>
        <end position="265"/>
    </location>
</feature>
<feature type="binding site" evidence="1">
    <location>
        <position position="111"/>
    </location>
    <ligand>
        <name>Zn(2+)</name>
        <dbReference type="ChEBI" id="CHEBI:29105"/>
    </ligand>
</feature>
<feature type="binding site" evidence="1">
    <location>
        <position position="148"/>
    </location>
    <ligand>
        <name>Zn(2+)</name>
        <dbReference type="ChEBI" id="CHEBI:29105"/>
    </ligand>
</feature>
<feature type="binding site" evidence="1">
    <location>
        <position position="152"/>
    </location>
    <ligand>
        <name>Zn(2+)</name>
        <dbReference type="ChEBI" id="CHEBI:29105"/>
    </ligand>
</feature>
<feature type="binding site" evidence="1">
    <location>
        <position position="211"/>
    </location>
    <ligand>
        <name>Zn(2+)</name>
        <dbReference type="ChEBI" id="CHEBI:29105"/>
    </ligand>
</feature>
<dbReference type="EC" id="3.4.11.-" evidence="1"/>
<dbReference type="EMBL" id="AE005674">
    <property type="protein sequence ID" value="AAN43588.1"/>
    <property type="status" value="ALT_INIT"/>
    <property type="molecule type" value="Genomic_DNA"/>
</dbReference>
<dbReference type="EMBL" id="AE014073">
    <property type="protein sequence ID" value="AAP17413.1"/>
    <property type="status" value="ALT_INIT"/>
    <property type="molecule type" value="Genomic_DNA"/>
</dbReference>
<dbReference type="RefSeq" id="NP_707881.1">
    <property type="nucleotide sequence ID" value="NC_004337.2"/>
</dbReference>
<dbReference type="RefSeq" id="WP_001325918.1">
    <property type="nucleotide sequence ID" value="NZ_WPGW01000183.1"/>
</dbReference>
<dbReference type="SMR" id="Q83KK8"/>
<dbReference type="STRING" id="198214.SF2045"/>
<dbReference type="MEROPS" id="M90.001"/>
<dbReference type="PaxDb" id="198214-SF2045"/>
<dbReference type="DNASU" id="1078468"/>
<dbReference type="GeneID" id="1026909"/>
<dbReference type="KEGG" id="sfl:SF2045"/>
<dbReference type="KEGG" id="sfx:S2148"/>
<dbReference type="PATRIC" id="fig|198214.7.peg.2447"/>
<dbReference type="HOGENOM" id="CLU_063037_0_1_6"/>
<dbReference type="Proteomes" id="UP000001006">
    <property type="component" value="Chromosome"/>
</dbReference>
<dbReference type="Proteomes" id="UP000002673">
    <property type="component" value="Chromosome"/>
</dbReference>
<dbReference type="GO" id="GO:0005829">
    <property type="term" value="C:cytosol"/>
    <property type="evidence" value="ECO:0007669"/>
    <property type="project" value="TreeGrafter"/>
</dbReference>
<dbReference type="GO" id="GO:0004177">
    <property type="term" value="F:aminopeptidase activity"/>
    <property type="evidence" value="ECO:0007669"/>
    <property type="project" value="UniProtKB-UniRule"/>
</dbReference>
<dbReference type="GO" id="GO:0008237">
    <property type="term" value="F:metallopeptidase activity"/>
    <property type="evidence" value="ECO:0007669"/>
    <property type="project" value="UniProtKB-UniRule"/>
</dbReference>
<dbReference type="GO" id="GO:0008270">
    <property type="term" value="F:zinc ion binding"/>
    <property type="evidence" value="ECO:0007669"/>
    <property type="project" value="UniProtKB-UniRule"/>
</dbReference>
<dbReference type="GO" id="GO:0006508">
    <property type="term" value="P:proteolysis"/>
    <property type="evidence" value="ECO:0007669"/>
    <property type="project" value="UniProtKB-KW"/>
</dbReference>
<dbReference type="CDD" id="cd20169">
    <property type="entry name" value="Peptidase_M90_mtfA"/>
    <property type="match status" value="1"/>
</dbReference>
<dbReference type="FunFam" id="1.10.472.150:FF:000001">
    <property type="entry name" value="Protein MtfA"/>
    <property type="match status" value="1"/>
</dbReference>
<dbReference type="FunFam" id="3.40.390.10:FF:000012">
    <property type="entry name" value="Protein MtfA"/>
    <property type="match status" value="1"/>
</dbReference>
<dbReference type="Gene3D" id="3.40.390.10">
    <property type="entry name" value="Collagenase (Catalytic Domain)"/>
    <property type="match status" value="1"/>
</dbReference>
<dbReference type="Gene3D" id="1.10.472.150">
    <property type="entry name" value="Glucose-regulated metallo-peptidase M90, N-terminal domain"/>
    <property type="match status" value="1"/>
</dbReference>
<dbReference type="HAMAP" id="MF_01593">
    <property type="entry name" value="MtfA"/>
    <property type="match status" value="1"/>
</dbReference>
<dbReference type="InterPro" id="IPR024079">
    <property type="entry name" value="MetalloPept_cat_dom_sf"/>
</dbReference>
<dbReference type="InterPro" id="IPR057256">
    <property type="entry name" value="MtfA_enterob"/>
</dbReference>
<dbReference type="InterPro" id="IPR010384">
    <property type="entry name" value="MtfA_fam"/>
</dbReference>
<dbReference type="InterPro" id="IPR042252">
    <property type="entry name" value="MtfA_N"/>
</dbReference>
<dbReference type="NCBIfam" id="NF011939">
    <property type="entry name" value="PRK15410.1"/>
    <property type="match status" value="1"/>
</dbReference>
<dbReference type="PANTHER" id="PTHR30164">
    <property type="entry name" value="MTFA PEPTIDASE"/>
    <property type="match status" value="1"/>
</dbReference>
<dbReference type="PANTHER" id="PTHR30164:SF2">
    <property type="entry name" value="PROTEIN MTFA"/>
    <property type="match status" value="1"/>
</dbReference>
<dbReference type="Pfam" id="PF06167">
    <property type="entry name" value="Peptidase_M90"/>
    <property type="match status" value="1"/>
</dbReference>
<dbReference type="SUPFAM" id="SSF55486">
    <property type="entry name" value="Metalloproteases ('zincins'), catalytic domain"/>
    <property type="match status" value="1"/>
</dbReference>
<protein>
    <recommendedName>
        <fullName evidence="1">Mlc titration factor A</fullName>
    </recommendedName>
    <alternativeName>
        <fullName evidence="1">Probable zinc metallopeptidase MtfA</fullName>
        <ecNumber evidence="1">3.4.11.-</ecNumber>
    </alternativeName>
</protein>
<name>MTFA_SHIFL</name>
<evidence type="ECO:0000255" key="1">
    <source>
        <dbReference type="HAMAP-Rule" id="MF_01593"/>
    </source>
</evidence>
<evidence type="ECO:0000305" key="2"/>
<accession>Q83KK8</accession>
<accession>Q7C132</accession>
<sequence>MIKWPWKVQESAHQTALPWQEALSIPLLTCLTEQEQSKLVALAERFLQQKRLVPLQGFELNSLRSCRIALLFCLPVLELGLEWLDGFHEVLIYPAPFVVDDEWEDDIGLVHNQRIVQSGQSWQQGPIVLNWLDIQDSFDASGFNLIIHEVAHKLDTRNGDRASGVPFISLREVAGWEHDLHAAMNNIQEEIELVGENAASIDAYAASDPAECFAVLSEYFFSAPELFAPRFPSLWQRFCQFYQQDPLQRLHHANDTDSFSATNVH</sequence>
<organism>
    <name type="scientific">Shigella flexneri</name>
    <dbReference type="NCBI Taxonomy" id="623"/>
    <lineage>
        <taxon>Bacteria</taxon>
        <taxon>Pseudomonadati</taxon>
        <taxon>Pseudomonadota</taxon>
        <taxon>Gammaproteobacteria</taxon>
        <taxon>Enterobacterales</taxon>
        <taxon>Enterobacteriaceae</taxon>
        <taxon>Shigella</taxon>
    </lineage>
</organism>
<gene>
    <name evidence="1" type="primary">mtfA</name>
    <name type="ordered locus">SF2045</name>
    <name type="ordered locus">S2148</name>
</gene>